<proteinExistence type="inferred from homology"/>
<keyword id="KW-0378">Hydrolase</keyword>
<keyword id="KW-0460">Magnesium</keyword>
<keyword id="KW-0464">Manganese</keyword>
<keyword id="KW-0479">Metal-binding</keyword>
<accession>Q1C8W1</accession>
<sequence>MSELITGQYLSEFINRFQLQLPQPDNVLTHSHYFSATNRRAAVLIPIICRPEPTLLLTRRADHLRKHAGQVAFPGGKADPDDQSLISTALREAEEEVAIPASVVHVLGKLAPLNSSSGYHVTPIVGLVPANIPFYGNDEEVAGLFEIPLHEALSLSRYHSLDIHREGINHRVYLSWYENQFIWGLTATIIRHLAQQVSI</sequence>
<comment type="function">
    <text evidence="1">Probably mediates the hydrolysis of some nucleoside diphosphate derivatives.</text>
</comment>
<comment type="cofactor">
    <cofactor evidence="1">
        <name>Mn(2+)</name>
        <dbReference type="ChEBI" id="CHEBI:29035"/>
    </cofactor>
    <cofactor evidence="1">
        <name>Mg(2+)</name>
        <dbReference type="ChEBI" id="CHEBI:18420"/>
    </cofactor>
</comment>
<comment type="similarity">
    <text evidence="1">Belongs to the Nudix hydrolase family. PCD1 subfamily.</text>
</comment>
<gene>
    <name evidence="1" type="primary">nudL</name>
    <name type="ordered locus">YPA_1144</name>
</gene>
<reference key="1">
    <citation type="journal article" date="2006" name="J. Bacteriol.">
        <title>Complete genome sequence of Yersinia pestis strains Antiqua and Nepal516: evidence of gene reduction in an emerging pathogen.</title>
        <authorList>
            <person name="Chain P.S.G."/>
            <person name="Hu P."/>
            <person name="Malfatti S.A."/>
            <person name="Radnedge L."/>
            <person name="Larimer F."/>
            <person name="Vergez L.M."/>
            <person name="Worsham P."/>
            <person name="Chu M.C."/>
            <person name="Andersen G.L."/>
        </authorList>
    </citation>
    <scope>NUCLEOTIDE SEQUENCE [LARGE SCALE GENOMIC DNA]</scope>
    <source>
        <strain>Antiqua</strain>
    </source>
</reference>
<name>NUDL_YERPA</name>
<protein>
    <recommendedName>
        <fullName evidence="1">Uncharacterized Nudix hydrolase NudL</fullName>
        <ecNumber evidence="1">3.6.1.-</ecNumber>
    </recommendedName>
</protein>
<organism>
    <name type="scientific">Yersinia pestis bv. Antiqua (strain Antiqua)</name>
    <dbReference type="NCBI Taxonomy" id="360102"/>
    <lineage>
        <taxon>Bacteria</taxon>
        <taxon>Pseudomonadati</taxon>
        <taxon>Pseudomonadota</taxon>
        <taxon>Gammaproteobacteria</taxon>
        <taxon>Enterobacterales</taxon>
        <taxon>Yersiniaceae</taxon>
        <taxon>Yersinia</taxon>
    </lineage>
</organism>
<evidence type="ECO:0000255" key="1">
    <source>
        <dbReference type="HAMAP-Rule" id="MF_01592"/>
    </source>
</evidence>
<dbReference type="EC" id="3.6.1.-" evidence="1"/>
<dbReference type="EMBL" id="CP000308">
    <property type="protein sequence ID" value="ABG13111.1"/>
    <property type="molecule type" value="Genomic_DNA"/>
</dbReference>
<dbReference type="RefSeq" id="WP_002211080.1">
    <property type="nucleotide sequence ID" value="NZ_CP009906.1"/>
</dbReference>
<dbReference type="SMR" id="Q1C8W1"/>
<dbReference type="KEGG" id="ypa:YPA_1144"/>
<dbReference type="Proteomes" id="UP000001971">
    <property type="component" value="Chromosome"/>
</dbReference>
<dbReference type="GO" id="GO:0010945">
    <property type="term" value="F:coenzyme A diphosphatase activity"/>
    <property type="evidence" value="ECO:0007669"/>
    <property type="project" value="InterPro"/>
</dbReference>
<dbReference type="GO" id="GO:0000287">
    <property type="term" value="F:magnesium ion binding"/>
    <property type="evidence" value="ECO:0007669"/>
    <property type="project" value="UniProtKB-UniRule"/>
</dbReference>
<dbReference type="GO" id="GO:0030145">
    <property type="term" value="F:manganese ion binding"/>
    <property type="evidence" value="ECO:0007669"/>
    <property type="project" value="UniProtKB-UniRule"/>
</dbReference>
<dbReference type="GO" id="GO:0009132">
    <property type="term" value="P:nucleoside diphosphate metabolic process"/>
    <property type="evidence" value="ECO:0007669"/>
    <property type="project" value="InterPro"/>
</dbReference>
<dbReference type="CDD" id="cd03426">
    <property type="entry name" value="NUDIX_CoAse_Nudt7"/>
    <property type="match status" value="1"/>
</dbReference>
<dbReference type="Gene3D" id="3.90.79.10">
    <property type="entry name" value="Nucleoside Triphosphate Pyrophosphohydrolase"/>
    <property type="match status" value="1"/>
</dbReference>
<dbReference type="HAMAP" id="MF_01592">
    <property type="entry name" value="Nudix_NudL"/>
    <property type="match status" value="1"/>
</dbReference>
<dbReference type="InterPro" id="IPR045121">
    <property type="entry name" value="CoAse"/>
</dbReference>
<dbReference type="InterPro" id="IPR015797">
    <property type="entry name" value="NUDIX_hydrolase-like_dom_sf"/>
</dbReference>
<dbReference type="InterPro" id="IPR000086">
    <property type="entry name" value="NUDIX_hydrolase_dom"/>
</dbReference>
<dbReference type="InterPro" id="IPR000059">
    <property type="entry name" value="NUDIX_hydrolase_NudL_CS"/>
</dbReference>
<dbReference type="InterPro" id="IPR023735">
    <property type="entry name" value="Nudix_NudL"/>
</dbReference>
<dbReference type="NCBIfam" id="NF007980">
    <property type="entry name" value="PRK10707.1"/>
    <property type="match status" value="1"/>
</dbReference>
<dbReference type="PANTHER" id="PTHR12992:SF11">
    <property type="entry name" value="MITOCHONDRIAL COENZYME A DIPHOSPHATASE NUDT8"/>
    <property type="match status" value="1"/>
</dbReference>
<dbReference type="PANTHER" id="PTHR12992">
    <property type="entry name" value="NUDIX HYDROLASE"/>
    <property type="match status" value="1"/>
</dbReference>
<dbReference type="Pfam" id="PF00293">
    <property type="entry name" value="NUDIX"/>
    <property type="match status" value="1"/>
</dbReference>
<dbReference type="SUPFAM" id="SSF55811">
    <property type="entry name" value="Nudix"/>
    <property type="match status" value="1"/>
</dbReference>
<dbReference type="PROSITE" id="PS51462">
    <property type="entry name" value="NUDIX"/>
    <property type="match status" value="1"/>
</dbReference>
<dbReference type="PROSITE" id="PS01293">
    <property type="entry name" value="NUDIX_COA"/>
    <property type="match status" value="1"/>
</dbReference>
<feature type="chain" id="PRO_0000315590" description="Uncharacterized Nudix hydrolase NudL">
    <location>
        <begin position="1"/>
        <end position="199"/>
    </location>
</feature>
<feature type="domain" description="Nudix hydrolase" evidence="1">
    <location>
        <begin position="38"/>
        <end position="169"/>
    </location>
</feature>
<feature type="short sequence motif" description="Nudix box">
    <location>
        <begin position="76"/>
        <end position="98"/>
    </location>
</feature>
<feature type="binding site" evidence="1">
    <location>
        <position position="92"/>
    </location>
    <ligand>
        <name>Mg(2+)</name>
        <dbReference type="ChEBI" id="CHEBI:18420"/>
    </ligand>
</feature>
<feature type="binding site" evidence="1">
    <location>
        <position position="96"/>
    </location>
    <ligand>
        <name>Mg(2+)</name>
        <dbReference type="ChEBI" id="CHEBI:18420"/>
    </ligand>
</feature>